<accession>Q18G63</accession>
<proteinExistence type="inferred from homology"/>
<gene>
    <name evidence="1" type="primary">rps2</name>
    <name type="ordered locus">HQ_2934A</name>
</gene>
<comment type="similarity">
    <text evidence="1">Belongs to the universal ribosomal protein uS2 family.</text>
</comment>
<organism>
    <name type="scientific">Haloquadratum walsbyi (strain DSM 16790 / HBSQ001)</name>
    <dbReference type="NCBI Taxonomy" id="362976"/>
    <lineage>
        <taxon>Archaea</taxon>
        <taxon>Methanobacteriati</taxon>
        <taxon>Methanobacteriota</taxon>
        <taxon>Stenosarchaea group</taxon>
        <taxon>Halobacteria</taxon>
        <taxon>Halobacteriales</taxon>
        <taxon>Haloferacaceae</taxon>
        <taxon>Haloquadratum</taxon>
    </lineage>
</organism>
<name>RS2_HALWD</name>
<dbReference type="EMBL" id="AM180088">
    <property type="protein sequence ID" value="CAJ53038.1"/>
    <property type="molecule type" value="Genomic_DNA"/>
</dbReference>
<dbReference type="SMR" id="Q18G63"/>
<dbReference type="STRING" id="362976.HQ_2934A"/>
<dbReference type="GeneID" id="4194656"/>
<dbReference type="KEGG" id="hwa:HQ_2934A"/>
<dbReference type="eggNOG" id="arCOG04245">
    <property type="taxonomic scope" value="Archaea"/>
</dbReference>
<dbReference type="HOGENOM" id="CLU_058171_3_0_2"/>
<dbReference type="Proteomes" id="UP000001975">
    <property type="component" value="Chromosome"/>
</dbReference>
<dbReference type="GO" id="GO:0015935">
    <property type="term" value="C:small ribosomal subunit"/>
    <property type="evidence" value="ECO:0007669"/>
    <property type="project" value="InterPro"/>
</dbReference>
<dbReference type="GO" id="GO:0003735">
    <property type="term" value="F:structural constituent of ribosome"/>
    <property type="evidence" value="ECO:0007669"/>
    <property type="project" value="InterPro"/>
</dbReference>
<dbReference type="GO" id="GO:0006412">
    <property type="term" value="P:translation"/>
    <property type="evidence" value="ECO:0007669"/>
    <property type="project" value="UniProtKB-UniRule"/>
</dbReference>
<dbReference type="CDD" id="cd01425">
    <property type="entry name" value="RPS2"/>
    <property type="match status" value="1"/>
</dbReference>
<dbReference type="FunFam" id="3.40.50.10490:FF:000030">
    <property type="entry name" value="30S ribosomal protein S2"/>
    <property type="match status" value="1"/>
</dbReference>
<dbReference type="Gene3D" id="3.40.50.10490">
    <property type="entry name" value="Glucose-6-phosphate isomerase like protein, domain 1"/>
    <property type="match status" value="1"/>
</dbReference>
<dbReference type="HAMAP" id="MF_00291_A">
    <property type="entry name" value="Ribosomal_uS2_A"/>
    <property type="match status" value="1"/>
</dbReference>
<dbReference type="InterPro" id="IPR001865">
    <property type="entry name" value="Ribosomal_uS2"/>
</dbReference>
<dbReference type="InterPro" id="IPR023454">
    <property type="entry name" value="Ribosomal_uS2_arc"/>
</dbReference>
<dbReference type="InterPro" id="IPR018130">
    <property type="entry name" value="Ribosomal_uS2_CS"/>
</dbReference>
<dbReference type="InterPro" id="IPR005707">
    <property type="entry name" value="Ribosomal_uS2_euk/arc"/>
</dbReference>
<dbReference type="InterPro" id="IPR023591">
    <property type="entry name" value="Ribosomal_uS2_flav_dom_sf"/>
</dbReference>
<dbReference type="NCBIfam" id="TIGR01012">
    <property type="entry name" value="uS2_euk_arch"/>
    <property type="match status" value="1"/>
</dbReference>
<dbReference type="PANTHER" id="PTHR11489">
    <property type="entry name" value="40S RIBOSOMAL PROTEIN SA"/>
    <property type="match status" value="1"/>
</dbReference>
<dbReference type="Pfam" id="PF00318">
    <property type="entry name" value="Ribosomal_S2"/>
    <property type="match status" value="2"/>
</dbReference>
<dbReference type="PRINTS" id="PR00395">
    <property type="entry name" value="RIBOSOMALS2"/>
</dbReference>
<dbReference type="SUPFAM" id="SSF52313">
    <property type="entry name" value="Ribosomal protein S2"/>
    <property type="match status" value="1"/>
</dbReference>
<dbReference type="PROSITE" id="PS00962">
    <property type="entry name" value="RIBOSOMAL_S2_1"/>
    <property type="match status" value="1"/>
</dbReference>
<dbReference type="PROSITE" id="PS00963">
    <property type="entry name" value="RIBOSOMAL_S2_2"/>
    <property type="match status" value="1"/>
</dbReference>
<feature type="chain" id="PRO_0000352055" description="Small ribosomal subunit protein uS2">
    <location>
        <begin position="1"/>
        <end position="279"/>
    </location>
</feature>
<feature type="region of interest" description="Disordered" evidence="2">
    <location>
        <begin position="1"/>
        <end position="81"/>
    </location>
</feature>
<feature type="compositionally biased region" description="Acidic residues" evidence="2">
    <location>
        <begin position="1"/>
        <end position="18"/>
    </location>
</feature>
<feature type="compositionally biased region" description="Acidic residues" evidence="2">
    <location>
        <begin position="28"/>
        <end position="42"/>
    </location>
</feature>
<feature type="compositionally biased region" description="Acidic residues" evidence="2">
    <location>
        <begin position="65"/>
        <end position="81"/>
    </location>
</feature>
<keyword id="KW-1185">Reference proteome</keyword>
<keyword id="KW-0687">Ribonucleoprotein</keyword>
<keyword id="KW-0689">Ribosomal protein</keyword>
<reference key="1">
    <citation type="journal article" date="2006" name="BMC Genomics">
        <title>The genome of the square archaeon Haloquadratum walsbyi: life at the limits of water activity.</title>
        <authorList>
            <person name="Bolhuis H."/>
            <person name="Palm P."/>
            <person name="Wende A."/>
            <person name="Falb M."/>
            <person name="Rampp M."/>
            <person name="Rodriguez-Valera F."/>
            <person name="Pfeiffer F."/>
            <person name="Oesterhelt D."/>
        </authorList>
    </citation>
    <scope>NUCLEOTIDE SEQUENCE [LARGE SCALE GENOMIC DNA]</scope>
    <source>
        <strain>DSM 16790 / HBSQ001</strain>
    </source>
</reference>
<sequence>MTENDNEVVEVVDDDEAVVSESPVDVDTATEAEADTETDESNETTPTASDAAGDETTTQTGNESADAEPDDELEGPTFDEDVMPDEEADLLIPVEDYLSAGVHIGTQQKTSDMERFIHRVRDDGLYVLDVSQTDSRIRTAANFLANYNPDQMLVTSSRQYGRFPAKKFADAVGARARTGRFIPGTLTNPDYAGYIEPDVVVVTDPIGDAQAVKEAITVGIPVIAMCDSNNQTSNTDLVVPTNNKGRRALSVVYWLLANETLDRRGADSLYALDEFEAEI</sequence>
<protein>
    <recommendedName>
        <fullName evidence="1">Small ribosomal subunit protein uS2</fullName>
    </recommendedName>
    <alternativeName>
        <fullName evidence="3">30S ribosomal protein S2</fullName>
    </alternativeName>
</protein>
<evidence type="ECO:0000255" key="1">
    <source>
        <dbReference type="HAMAP-Rule" id="MF_00291"/>
    </source>
</evidence>
<evidence type="ECO:0000256" key="2">
    <source>
        <dbReference type="SAM" id="MobiDB-lite"/>
    </source>
</evidence>
<evidence type="ECO:0000305" key="3"/>